<protein>
    <recommendedName>
        <fullName>Isoleucine--tRNA ligase</fullName>
        <ecNumber>6.1.1.5</ecNumber>
    </recommendedName>
    <alternativeName>
        <fullName>Isoleucyl-tRNA synthetase</fullName>
        <shortName>IleRS</shortName>
    </alternativeName>
</protein>
<accession>Q6GA19</accession>
<gene>
    <name type="primary">ileS</name>
    <name type="ordered locus">SAS1127</name>
</gene>
<sequence>MDYKETLLMPKTDFPMRGGLPNKEPQIQEKWDAEDQYHKALEKNKGNETFILHDGPPYANGNLHMGHALNKILKDFIVRYKTMQGFYAPYVPGWDTHGLPIEQALTKKGVDRKKMSTAEFREKCKEFALEQIELQKKDFRRLGVRGDFNDPYITLKPEYEAAQIRIFGEMADKGLIYKGKKPVYWSPSSESSLAEAEIEYHDKRSASIYVAFDVKDDKGVVDADAKFIIWTTTPWTIPSNVAITVHPELKYGQYNVDGEKYIIAEALSDAVAEALDWDKASIKLEKEYTGKELEYVVAQHPFLDRESLVINGDHVTTDAGTGCVHTAPGHGEDDYIVGQKYELPVISPIDDKGVFTEEGGQFEGMFYDKANKAVTDLLTEKGALLKLDFITHSYPHDWRTKKPVIFRATPQWFASISKVRQDILDAIENTNFKVNWGKTRIYNMVRDRGEWVISRQRVWGVPLPVFYAENGEIIMTKETVNHVADLFAEHGSNIWFEREAKDLLPEGFTHPGSPNGTFTKETDIMDVWFDSGSSHRGVLETRPELSFPADMYLEGSDQYRGWFNSSITTSVATRGVSPYKFLLSHGFVMDGEGKKMSKSLGNVIVPDQVVKQKGADIARLWVSSTDYLADVRISDEILKQTSDVYRKIRNTLRFMLGNINDFNPDTDSITESELLEVDRYLLNRLREFTASTINNYENFDYLNIYQEVQNFINVELSNFYLDYGKDILYIEQRDSHIRRSMQTVLYQILVDMTKLLAPILVHTAEEVWSHTPHVKEESVHLADMPKVVEVDQALLDKWRTFMNLRDDVNRALETARNEKVIGKSLEAKVTIASNDKFNASEFLTSFDALHQLFIVSQVKVVDKLDDQATAYEHGDIVIEHADGEKCERCWNYSEDLGAVDELTHLCPRCQQVVKSLV</sequence>
<proteinExistence type="inferred from homology"/>
<keyword id="KW-0030">Aminoacyl-tRNA synthetase</keyword>
<keyword id="KW-0067">ATP-binding</keyword>
<keyword id="KW-0963">Cytoplasm</keyword>
<keyword id="KW-0436">Ligase</keyword>
<keyword id="KW-0479">Metal-binding</keyword>
<keyword id="KW-0547">Nucleotide-binding</keyword>
<keyword id="KW-0648">Protein biosynthesis</keyword>
<keyword id="KW-0862">Zinc</keyword>
<feature type="chain" id="PRO_0000098466" description="Isoleucine--tRNA ligase">
    <location>
        <begin position="1"/>
        <end position="917"/>
    </location>
</feature>
<feature type="short sequence motif" description="'HIGH' region">
    <location>
        <begin position="57"/>
        <end position="67"/>
    </location>
</feature>
<feature type="short sequence motif" description="'KMSKS' region">
    <location>
        <begin position="595"/>
        <end position="599"/>
    </location>
</feature>
<feature type="binding site" evidence="1">
    <location>
        <position position="554"/>
    </location>
    <ligand>
        <name>L-isoleucyl-5'-AMP</name>
        <dbReference type="ChEBI" id="CHEBI:178002"/>
    </ligand>
</feature>
<feature type="binding site" evidence="1">
    <location>
        <position position="598"/>
    </location>
    <ligand>
        <name>ATP</name>
        <dbReference type="ChEBI" id="CHEBI:30616"/>
    </ligand>
</feature>
<feature type="binding site" evidence="1">
    <location>
        <position position="886"/>
    </location>
    <ligand>
        <name>Zn(2+)</name>
        <dbReference type="ChEBI" id="CHEBI:29105"/>
    </ligand>
</feature>
<feature type="binding site" evidence="1">
    <location>
        <position position="889"/>
    </location>
    <ligand>
        <name>Zn(2+)</name>
        <dbReference type="ChEBI" id="CHEBI:29105"/>
    </ligand>
</feature>
<feature type="binding site" evidence="1">
    <location>
        <position position="906"/>
    </location>
    <ligand>
        <name>Zn(2+)</name>
        <dbReference type="ChEBI" id="CHEBI:29105"/>
    </ligand>
</feature>
<feature type="binding site" evidence="1">
    <location>
        <position position="909"/>
    </location>
    <ligand>
        <name>Zn(2+)</name>
        <dbReference type="ChEBI" id="CHEBI:29105"/>
    </ligand>
</feature>
<organism>
    <name type="scientific">Staphylococcus aureus (strain MSSA476)</name>
    <dbReference type="NCBI Taxonomy" id="282459"/>
    <lineage>
        <taxon>Bacteria</taxon>
        <taxon>Bacillati</taxon>
        <taxon>Bacillota</taxon>
        <taxon>Bacilli</taxon>
        <taxon>Bacillales</taxon>
        <taxon>Staphylococcaceae</taxon>
        <taxon>Staphylococcus</taxon>
    </lineage>
</organism>
<dbReference type="EC" id="6.1.1.5"/>
<dbReference type="EMBL" id="BX571857">
    <property type="protein sequence ID" value="CAG42904.1"/>
    <property type="molecule type" value="Genomic_DNA"/>
</dbReference>
<dbReference type="RefSeq" id="WP_000384677.1">
    <property type="nucleotide sequence ID" value="NC_002953.3"/>
</dbReference>
<dbReference type="SMR" id="Q6GA19"/>
<dbReference type="KEGG" id="sas:SAS1127"/>
<dbReference type="HOGENOM" id="CLU_001493_7_1_9"/>
<dbReference type="GO" id="GO:0005829">
    <property type="term" value="C:cytosol"/>
    <property type="evidence" value="ECO:0007669"/>
    <property type="project" value="TreeGrafter"/>
</dbReference>
<dbReference type="GO" id="GO:0002161">
    <property type="term" value="F:aminoacyl-tRNA deacylase activity"/>
    <property type="evidence" value="ECO:0007669"/>
    <property type="project" value="InterPro"/>
</dbReference>
<dbReference type="GO" id="GO:0005524">
    <property type="term" value="F:ATP binding"/>
    <property type="evidence" value="ECO:0007669"/>
    <property type="project" value="UniProtKB-UniRule"/>
</dbReference>
<dbReference type="GO" id="GO:0004822">
    <property type="term" value="F:isoleucine-tRNA ligase activity"/>
    <property type="evidence" value="ECO:0007669"/>
    <property type="project" value="UniProtKB-UniRule"/>
</dbReference>
<dbReference type="GO" id="GO:0000049">
    <property type="term" value="F:tRNA binding"/>
    <property type="evidence" value="ECO:0007669"/>
    <property type="project" value="InterPro"/>
</dbReference>
<dbReference type="GO" id="GO:0008270">
    <property type="term" value="F:zinc ion binding"/>
    <property type="evidence" value="ECO:0007669"/>
    <property type="project" value="UniProtKB-UniRule"/>
</dbReference>
<dbReference type="GO" id="GO:0006428">
    <property type="term" value="P:isoleucyl-tRNA aminoacylation"/>
    <property type="evidence" value="ECO:0007669"/>
    <property type="project" value="UniProtKB-UniRule"/>
</dbReference>
<dbReference type="CDD" id="cd07960">
    <property type="entry name" value="Anticodon_Ia_Ile_BEm"/>
    <property type="match status" value="1"/>
</dbReference>
<dbReference type="CDD" id="cd00818">
    <property type="entry name" value="IleRS_core"/>
    <property type="match status" value="1"/>
</dbReference>
<dbReference type="FunFam" id="1.10.10.830:FF:000001">
    <property type="entry name" value="Isoleucine--tRNA ligase"/>
    <property type="match status" value="1"/>
</dbReference>
<dbReference type="FunFam" id="1.10.730.20:FF:000001">
    <property type="entry name" value="Isoleucine--tRNA ligase"/>
    <property type="match status" value="1"/>
</dbReference>
<dbReference type="FunFam" id="3.40.50.620:FF:000152">
    <property type="entry name" value="Isoleucine--tRNA ligase"/>
    <property type="match status" value="1"/>
</dbReference>
<dbReference type="FunFam" id="3.90.740.10:FF:000006">
    <property type="entry name" value="Isoleucine--tRNA ligase"/>
    <property type="match status" value="1"/>
</dbReference>
<dbReference type="Gene3D" id="1.10.730.20">
    <property type="match status" value="1"/>
</dbReference>
<dbReference type="Gene3D" id="3.40.50.620">
    <property type="entry name" value="HUPs"/>
    <property type="match status" value="2"/>
</dbReference>
<dbReference type="Gene3D" id="1.10.10.830">
    <property type="entry name" value="Ile-tRNA synthetase CP2 domain-like"/>
    <property type="match status" value="1"/>
</dbReference>
<dbReference type="HAMAP" id="MF_02002">
    <property type="entry name" value="Ile_tRNA_synth_type1"/>
    <property type="match status" value="1"/>
</dbReference>
<dbReference type="InterPro" id="IPR001412">
    <property type="entry name" value="aa-tRNA-synth_I_CS"/>
</dbReference>
<dbReference type="InterPro" id="IPR002300">
    <property type="entry name" value="aa-tRNA-synth_Ia"/>
</dbReference>
<dbReference type="InterPro" id="IPR033708">
    <property type="entry name" value="Anticodon_Ile_BEm"/>
</dbReference>
<dbReference type="InterPro" id="IPR002301">
    <property type="entry name" value="Ile-tRNA-ligase"/>
</dbReference>
<dbReference type="InterPro" id="IPR023585">
    <property type="entry name" value="Ile-tRNA-ligase_type1"/>
</dbReference>
<dbReference type="InterPro" id="IPR050081">
    <property type="entry name" value="Ile-tRNA_ligase"/>
</dbReference>
<dbReference type="InterPro" id="IPR013155">
    <property type="entry name" value="M/V/L/I-tRNA-synth_anticd-bd"/>
</dbReference>
<dbReference type="InterPro" id="IPR014729">
    <property type="entry name" value="Rossmann-like_a/b/a_fold"/>
</dbReference>
<dbReference type="InterPro" id="IPR009080">
    <property type="entry name" value="tRNAsynth_Ia_anticodon-bd"/>
</dbReference>
<dbReference type="InterPro" id="IPR009008">
    <property type="entry name" value="Val/Leu/Ile-tRNA-synth_edit"/>
</dbReference>
<dbReference type="InterPro" id="IPR010663">
    <property type="entry name" value="Znf_FPG/IleRS"/>
</dbReference>
<dbReference type="NCBIfam" id="TIGR00392">
    <property type="entry name" value="ileS"/>
    <property type="match status" value="1"/>
</dbReference>
<dbReference type="PANTHER" id="PTHR42765:SF1">
    <property type="entry name" value="ISOLEUCINE--TRNA LIGASE, MITOCHONDRIAL"/>
    <property type="match status" value="1"/>
</dbReference>
<dbReference type="PANTHER" id="PTHR42765">
    <property type="entry name" value="SOLEUCYL-TRNA SYNTHETASE"/>
    <property type="match status" value="1"/>
</dbReference>
<dbReference type="Pfam" id="PF08264">
    <property type="entry name" value="Anticodon_1"/>
    <property type="match status" value="1"/>
</dbReference>
<dbReference type="Pfam" id="PF00133">
    <property type="entry name" value="tRNA-synt_1"/>
    <property type="match status" value="1"/>
</dbReference>
<dbReference type="Pfam" id="PF06827">
    <property type="entry name" value="zf-FPG_IleRS"/>
    <property type="match status" value="1"/>
</dbReference>
<dbReference type="PRINTS" id="PR00984">
    <property type="entry name" value="TRNASYNTHILE"/>
</dbReference>
<dbReference type="SUPFAM" id="SSF47323">
    <property type="entry name" value="Anticodon-binding domain of a subclass of class I aminoacyl-tRNA synthetases"/>
    <property type="match status" value="1"/>
</dbReference>
<dbReference type="SUPFAM" id="SSF52374">
    <property type="entry name" value="Nucleotidylyl transferase"/>
    <property type="match status" value="1"/>
</dbReference>
<dbReference type="SUPFAM" id="SSF50677">
    <property type="entry name" value="ValRS/IleRS/LeuRS editing domain"/>
    <property type="match status" value="1"/>
</dbReference>
<dbReference type="PROSITE" id="PS00178">
    <property type="entry name" value="AA_TRNA_LIGASE_I"/>
    <property type="match status" value="1"/>
</dbReference>
<comment type="function">
    <text evidence="1">Catalyzes the attachment of isoleucine to tRNA(Ile). As IleRS can inadvertently accommodate and process structurally similar amino acids such as valine, to avoid such errors it has two additional distinct tRNA(Ile)-dependent editing activities. One activity is designated as 'pretransfer' editing and involves the hydrolysis of activated Val-AMP. The other activity is designated 'posttransfer' editing and involves deacylation of mischarged Val-tRNA(Ile) (By similarity).</text>
</comment>
<comment type="catalytic activity">
    <reaction>
        <text>tRNA(Ile) + L-isoleucine + ATP = L-isoleucyl-tRNA(Ile) + AMP + diphosphate</text>
        <dbReference type="Rhea" id="RHEA:11060"/>
        <dbReference type="Rhea" id="RHEA-COMP:9666"/>
        <dbReference type="Rhea" id="RHEA-COMP:9695"/>
        <dbReference type="ChEBI" id="CHEBI:30616"/>
        <dbReference type="ChEBI" id="CHEBI:33019"/>
        <dbReference type="ChEBI" id="CHEBI:58045"/>
        <dbReference type="ChEBI" id="CHEBI:78442"/>
        <dbReference type="ChEBI" id="CHEBI:78528"/>
        <dbReference type="ChEBI" id="CHEBI:456215"/>
        <dbReference type="EC" id="6.1.1.5"/>
    </reaction>
</comment>
<comment type="cofactor">
    <cofactor evidence="1">
        <name>Zn(2+)</name>
        <dbReference type="ChEBI" id="CHEBI:29105"/>
    </cofactor>
    <text evidence="1">Binds 1 zinc ion per subunit.</text>
</comment>
<comment type="subunit">
    <text evidence="1">Monomer.</text>
</comment>
<comment type="subcellular location">
    <subcellularLocation>
        <location evidence="1">Cytoplasm</location>
    </subcellularLocation>
</comment>
<comment type="domain">
    <text evidence="1">IleRS has two distinct active sites: one for aminoacylation and one for editing. The misactivated valine is translocated from the active site to the editing site, which sterically excludes the correctly activated isoleucine. The single editing site contains two valyl binding pockets, one specific for each substrate (Val-AMP or Val-tRNA(Ile)) (By similarity).</text>
</comment>
<comment type="similarity">
    <text evidence="2">Belongs to the class-I aminoacyl-tRNA synthetase family. IleS type 1 subfamily.</text>
</comment>
<evidence type="ECO:0000250" key="1"/>
<evidence type="ECO:0000305" key="2"/>
<reference key="1">
    <citation type="journal article" date="2004" name="Proc. Natl. Acad. Sci. U.S.A.">
        <title>Complete genomes of two clinical Staphylococcus aureus strains: evidence for the rapid evolution of virulence and drug resistance.</title>
        <authorList>
            <person name="Holden M.T.G."/>
            <person name="Feil E.J."/>
            <person name="Lindsay J.A."/>
            <person name="Peacock S.J."/>
            <person name="Day N.P.J."/>
            <person name="Enright M.C."/>
            <person name="Foster T.J."/>
            <person name="Moore C.E."/>
            <person name="Hurst L."/>
            <person name="Atkin R."/>
            <person name="Barron A."/>
            <person name="Bason N."/>
            <person name="Bentley S.D."/>
            <person name="Chillingworth C."/>
            <person name="Chillingworth T."/>
            <person name="Churcher C."/>
            <person name="Clark L."/>
            <person name="Corton C."/>
            <person name="Cronin A."/>
            <person name="Doggett J."/>
            <person name="Dowd L."/>
            <person name="Feltwell T."/>
            <person name="Hance Z."/>
            <person name="Harris B."/>
            <person name="Hauser H."/>
            <person name="Holroyd S."/>
            <person name="Jagels K."/>
            <person name="James K.D."/>
            <person name="Lennard N."/>
            <person name="Line A."/>
            <person name="Mayes R."/>
            <person name="Moule S."/>
            <person name="Mungall K."/>
            <person name="Ormond D."/>
            <person name="Quail M.A."/>
            <person name="Rabbinowitsch E."/>
            <person name="Rutherford K.M."/>
            <person name="Sanders M."/>
            <person name="Sharp S."/>
            <person name="Simmonds M."/>
            <person name="Stevens K."/>
            <person name="Whitehead S."/>
            <person name="Barrell B.G."/>
            <person name="Spratt B.G."/>
            <person name="Parkhill J."/>
        </authorList>
    </citation>
    <scope>NUCLEOTIDE SEQUENCE [LARGE SCALE GENOMIC DNA]</scope>
    <source>
        <strain>MSSA476</strain>
    </source>
</reference>
<name>SYI_STAAS</name>